<name>KCRS_RABIT</name>
<sequence>MASTFSKLLTGRNASLLFATLGTSALTTGYLVNRQKVCAEARDQHKLFPPSADYPDLRKHNNCMAECLTPSIYAKLRNKVTANGYTLDQCIQTGVDNPGHPFIKTVGMVAGDEESYEVFADLFDPVIKLRHNGYDPRVMKHPTDLDASKITQGQFDERYVLSSRVRTGRSIRGLSLPPACSRAEAREVENVAITALEGLKGDLAGRYYRLSEMTEQDQQRLIDDHFLFDKPVSPLLTCAGMARDWPDARGIWHNYDNTFLIWINEEDHTRVISMEKGGNMKRVFERFCRGLKEVERLIQERGWEFMWNERLGYILTCPSNLGTGLRAGVHVRIPKLSKDPRFSKILENLRLQKRGTGGVDTRAVADVYDISNIDRIGRSEVELVQIVIDGVNYLVDCEKKLERGQDIKVPPPLPQFGKK</sequence>
<feature type="transit peptide" description="Mitochondrion">
    <location>
        <begin position="1"/>
        <end position="39"/>
    </location>
</feature>
<feature type="chain" id="PRO_0000016597" description="Creatine kinase S-type, mitochondrial">
    <location>
        <begin position="40"/>
        <end position="419"/>
    </location>
</feature>
<feature type="domain" description="Phosphagen kinase N-terminal" evidence="4">
    <location>
        <begin position="46"/>
        <end position="132"/>
    </location>
</feature>
<feature type="domain" description="Phosphagen kinase C-terminal" evidence="5">
    <location>
        <begin position="159"/>
        <end position="401"/>
    </location>
</feature>
<feature type="region of interest" description="Cardiolipin-binding" evidence="1">
    <location>
        <begin position="40"/>
        <end position="64"/>
    </location>
</feature>
<feature type="binding site" evidence="5">
    <location>
        <begin position="162"/>
        <end position="166"/>
    </location>
    <ligand>
        <name>ATP</name>
        <dbReference type="ChEBI" id="CHEBI:30616"/>
    </ligand>
</feature>
<feature type="binding site" evidence="5">
    <location>
        <position position="225"/>
    </location>
    <ligand>
        <name>ATP</name>
        <dbReference type="ChEBI" id="CHEBI:30616"/>
    </ligand>
</feature>
<feature type="binding site" evidence="5">
    <location>
        <position position="270"/>
    </location>
    <ligand>
        <name>ATP</name>
        <dbReference type="ChEBI" id="CHEBI:30616"/>
    </ligand>
</feature>
<feature type="binding site" evidence="5">
    <location>
        <position position="326"/>
    </location>
    <ligand>
        <name>ATP</name>
        <dbReference type="ChEBI" id="CHEBI:30616"/>
    </ligand>
</feature>
<feature type="binding site" evidence="5">
    <location>
        <begin position="354"/>
        <end position="359"/>
    </location>
    <ligand>
        <name>ATP</name>
        <dbReference type="ChEBI" id="CHEBI:30616"/>
    </ligand>
</feature>
<feature type="binding site" evidence="5">
    <location>
        <position position="369"/>
    </location>
    <ligand>
        <name>ATP</name>
        <dbReference type="ChEBI" id="CHEBI:30616"/>
    </ligand>
</feature>
<feature type="modified residue" description="Phosphotyrosine" evidence="2">
    <location>
        <position position="255"/>
    </location>
</feature>
<feature type="modified residue" description="Phosphothreonine" evidence="3">
    <location>
        <position position="356"/>
    </location>
</feature>
<gene>
    <name type="primary">CKMT2</name>
</gene>
<keyword id="KW-0067">ATP-binding</keyword>
<keyword id="KW-0418">Kinase</keyword>
<keyword id="KW-0472">Membrane</keyword>
<keyword id="KW-0496">Mitochondrion</keyword>
<keyword id="KW-0999">Mitochondrion inner membrane</keyword>
<keyword id="KW-0547">Nucleotide-binding</keyword>
<keyword id="KW-0597">Phosphoprotein</keyword>
<keyword id="KW-1185">Reference proteome</keyword>
<keyword id="KW-0808">Transferase</keyword>
<keyword id="KW-0809">Transit peptide</keyword>
<protein>
    <recommendedName>
        <fullName>Creatine kinase S-type, mitochondrial</fullName>
        <ecNumber>2.7.3.2</ecNumber>
    </recommendedName>
    <alternativeName>
        <fullName>Basic-type mitochondrial creatine kinase</fullName>
        <shortName>Mib-CK</shortName>
    </alternativeName>
    <alternativeName>
        <fullName>RSMTCK</fullName>
    </alternativeName>
    <alternativeName>
        <fullName>Sarcomeric mitochondrial creatine kinase</fullName>
        <shortName>S-MtCK</shortName>
    </alternativeName>
</protein>
<evidence type="ECO:0000250" key="1"/>
<evidence type="ECO:0000250" key="2">
    <source>
        <dbReference type="UniProtKB" id="P09605"/>
    </source>
</evidence>
<evidence type="ECO:0000250" key="3">
    <source>
        <dbReference type="UniProtKB" id="Q6P8J7"/>
    </source>
</evidence>
<evidence type="ECO:0000255" key="4">
    <source>
        <dbReference type="PROSITE-ProRule" id="PRU00842"/>
    </source>
</evidence>
<evidence type="ECO:0000255" key="5">
    <source>
        <dbReference type="PROSITE-ProRule" id="PRU00843"/>
    </source>
</evidence>
<evidence type="ECO:0000255" key="6">
    <source>
        <dbReference type="PROSITE-ProRule" id="PRU10029"/>
    </source>
</evidence>
<organism>
    <name type="scientific">Oryctolagus cuniculus</name>
    <name type="common">Rabbit</name>
    <dbReference type="NCBI Taxonomy" id="9986"/>
    <lineage>
        <taxon>Eukaryota</taxon>
        <taxon>Metazoa</taxon>
        <taxon>Chordata</taxon>
        <taxon>Craniata</taxon>
        <taxon>Vertebrata</taxon>
        <taxon>Euteleostomi</taxon>
        <taxon>Mammalia</taxon>
        <taxon>Eutheria</taxon>
        <taxon>Euarchontoglires</taxon>
        <taxon>Glires</taxon>
        <taxon>Lagomorpha</taxon>
        <taxon>Leporidae</taxon>
        <taxon>Oryctolagus</taxon>
    </lineage>
</organism>
<reference key="1">
    <citation type="journal article" date="1999" name="Protein Expr. Purif.">
        <title>Cloning, Escherichia coli expression, and phase-transition chromatography-based purification of recombinant rabbit heart mitochondrial creatine kinase.</title>
        <authorList>
            <person name="Marcillat O."/>
            <person name="Perraut C."/>
            <person name="Granjon T."/>
            <person name="Vial C."/>
            <person name="Vacheron M.J."/>
        </authorList>
    </citation>
    <scope>NUCLEOTIDE SEQUENCE [MRNA]</scope>
    <source>
        <tissue>Heart</tissue>
    </source>
</reference>
<comment type="function">
    <text evidence="1">Reversibly catalyzes the transfer of phosphate between ATP and various phosphogens (e.g. creatine phosphate). Creatine kinase isoenzymes play a central role in energy transduction in tissues with large, fluctuating energy demands, such as skeletal muscle, heart, brain and spermatozoa (By similarity).</text>
</comment>
<comment type="catalytic activity">
    <reaction evidence="6">
        <text>creatine + ATP = N-phosphocreatine + ADP + H(+)</text>
        <dbReference type="Rhea" id="RHEA:17157"/>
        <dbReference type="ChEBI" id="CHEBI:15378"/>
        <dbReference type="ChEBI" id="CHEBI:30616"/>
        <dbReference type="ChEBI" id="CHEBI:57947"/>
        <dbReference type="ChEBI" id="CHEBI:58092"/>
        <dbReference type="ChEBI" id="CHEBI:456216"/>
        <dbReference type="EC" id="2.7.3.2"/>
    </reaction>
</comment>
<comment type="subunit">
    <text evidence="1">Exists as an octamer composed of four CKMT2 homodimers.</text>
</comment>
<comment type="subcellular location">
    <subcellularLocation>
        <location evidence="1">Mitochondrion inner membrane</location>
        <topology evidence="1">Peripheral membrane protein</topology>
        <orientation evidence="1">Intermembrane side</orientation>
    </subcellularLocation>
</comment>
<comment type="miscellaneous">
    <text>Mitochondrial creatine kinase binds cardiolipin.</text>
</comment>
<comment type="similarity">
    <text evidence="4 5">Belongs to the ATP:guanido phosphotransferase family.</text>
</comment>
<proteinExistence type="evidence at transcript level"/>
<accession>O77814</accession>
<dbReference type="EC" id="2.7.3.2"/>
<dbReference type="EMBL" id="AJ011334">
    <property type="protein sequence ID" value="CAA09597.1"/>
    <property type="molecule type" value="mRNA"/>
</dbReference>
<dbReference type="RefSeq" id="NP_001156542.1">
    <property type="nucleotide sequence ID" value="NM_001163070.1"/>
</dbReference>
<dbReference type="SMR" id="O77814"/>
<dbReference type="FunCoup" id="O77814">
    <property type="interactions" value="68"/>
</dbReference>
<dbReference type="STRING" id="9986.ENSOCUP00000009646"/>
<dbReference type="PaxDb" id="9986-ENSOCUP00000009646"/>
<dbReference type="GeneID" id="100302412"/>
<dbReference type="KEGG" id="ocu:100302412"/>
<dbReference type="CTD" id="1160"/>
<dbReference type="eggNOG" id="KOG3581">
    <property type="taxonomic scope" value="Eukaryota"/>
</dbReference>
<dbReference type="InParanoid" id="O77814"/>
<dbReference type="OrthoDB" id="430219at2759"/>
<dbReference type="Proteomes" id="UP000001811">
    <property type="component" value="Unplaced"/>
</dbReference>
<dbReference type="GO" id="GO:0005743">
    <property type="term" value="C:mitochondrial inner membrane"/>
    <property type="evidence" value="ECO:0007669"/>
    <property type="project" value="UniProtKB-SubCell"/>
</dbReference>
<dbReference type="GO" id="GO:0005524">
    <property type="term" value="F:ATP binding"/>
    <property type="evidence" value="ECO:0007669"/>
    <property type="project" value="UniProtKB-KW"/>
</dbReference>
<dbReference type="GO" id="GO:0004111">
    <property type="term" value="F:creatine kinase activity"/>
    <property type="evidence" value="ECO:0007669"/>
    <property type="project" value="UniProtKB-EC"/>
</dbReference>
<dbReference type="GO" id="GO:0046314">
    <property type="term" value="P:phosphocreatine biosynthetic process"/>
    <property type="evidence" value="ECO:0007669"/>
    <property type="project" value="InterPro"/>
</dbReference>
<dbReference type="CDD" id="cd00716">
    <property type="entry name" value="creatine_kinase_like"/>
    <property type="match status" value="1"/>
</dbReference>
<dbReference type="FunFam" id="3.30.590.10:FF:000002">
    <property type="entry name" value="Creatine kinase S-type, mitochondrial"/>
    <property type="match status" value="1"/>
</dbReference>
<dbReference type="FunFam" id="1.10.135.10:FF:000002">
    <property type="entry name" value="creatine kinase S-type, mitochondrial"/>
    <property type="match status" value="1"/>
</dbReference>
<dbReference type="Gene3D" id="1.10.135.10">
    <property type="entry name" value="ATP:guanido phosphotransferase, N-terminal domain"/>
    <property type="match status" value="1"/>
</dbReference>
<dbReference type="Gene3D" id="3.30.590.10">
    <property type="entry name" value="Glutamine synthetase/guanido kinase, catalytic domain"/>
    <property type="match status" value="1"/>
</dbReference>
<dbReference type="InterPro" id="IPR000749">
    <property type="entry name" value="ATP-guanido_PTrfase"/>
</dbReference>
<dbReference type="InterPro" id="IPR022415">
    <property type="entry name" value="ATP-guanido_PTrfase_AS"/>
</dbReference>
<dbReference type="InterPro" id="IPR022414">
    <property type="entry name" value="ATP-guanido_PTrfase_cat"/>
</dbReference>
<dbReference type="InterPro" id="IPR022413">
    <property type="entry name" value="ATP-guanido_PTrfase_N"/>
</dbReference>
<dbReference type="InterPro" id="IPR036802">
    <property type="entry name" value="ATP-guanido_PTrfase_N_sf"/>
</dbReference>
<dbReference type="InterPro" id="IPR014746">
    <property type="entry name" value="Gln_synth/guanido_kin_cat_dom"/>
</dbReference>
<dbReference type="PANTHER" id="PTHR11547">
    <property type="entry name" value="ARGININE OR CREATINE KINASE"/>
    <property type="match status" value="1"/>
</dbReference>
<dbReference type="PANTHER" id="PTHR11547:SF19">
    <property type="entry name" value="CREATINE KINASE S-TYPE, MITOCHONDRIAL"/>
    <property type="match status" value="1"/>
</dbReference>
<dbReference type="Pfam" id="PF00217">
    <property type="entry name" value="ATP-gua_Ptrans"/>
    <property type="match status" value="1"/>
</dbReference>
<dbReference type="Pfam" id="PF02807">
    <property type="entry name" value="ATP-gua_PtransN"/>
    <property type="match status" value="1"/>
</dbReference>
<dbReference type="SUPFAM" id="SSF55931">
    <property type="entry name" value="Glutamine synthetase/guanido kinase"/>
    <property type="match status" value="1"/>
</dbReference>
<dbReference type="SUPFAM" id="SSF48034">
    <property type="entry name" value="Guanido kinase N-terminal domain"/>
    <property type="match status" value="1"/>
</dbReference>
<dbReference type="PROSITE" id="PS00112">
    <property type="entry name" value="PHOSPHAGEN_KINASE"/>
    <property type="match status" value="1"/>
</dbReference>
<dbReference type="PROSITE" id="PS51510">
    <property type="entry name" value="PHOSPHAGEN_KINASE_C"/>
    <property type="match status" value="1"/>
</dbReference>
<dbReference type="PROSITE" id="PS51509">
    <property type="entry name" value="PHOSPHAGEN_KINASE_N"/>
    <property type="match status" value="1"/>
</dbReference>